<dbReference type="EC" id="6.1.1.5" evidence="1"/>
<dbReference type="EMBL" id="CP001396">
    <property type="protein sequence ID" value="ACR63562.1"/>
    <property type="molecule type" value="Genomic_DNA"/>
</dbReference>
<dbReference type="RefSeq" id="WP_001286857.1">
    <property type="nucleotide sequence ID" value="NC_012759.1"/>
</dbReference>
<dbReference type="SMR" id="C4ZPV2"/>
<dbReference type="GeneID" id="93777410"/>
<dbReference type="KEGG" id="ebw:BWG_0024"/>
<dbReference type="HOGENOM" id="CLU_001493_7_1_6"/>
<dbReference type="GO" id="GO:0005829">
    <property type="term" value="C:cytosol"/>
    <property type="evidence" value="ECO:0007669"/>
    <property type="project" value="TreeGrafter"/>
</dbReference>
<dbReference type="GO" id="GO:0002161">
    <property type="term" value="F:aminoacyl-tRNA deacylase activity"/>
    <property type="evidence" value="ECO:0007669"/>
    <property type="project" value="InterPro"/>
</dbReference>
<dbReference type="GO" id="GO:0005524">
    <property type="term" value="F:ATP binding"/>
    <property type="evidence" value="ECO:0007669"/>
    <property type="project" value="UniProtKB-UniRule"/>
</dbReference>
<dbReference type="GO" id="GO:0004822">
    <property type="term" value="F:isoleucine-tRNA ligase activity"/>
    <property type="evidence" value="ECO:0007669"/>
    <property type="project" value="UniProtKB-UniRule"/>
</dbReference>
<dbReference type="GO" id="GO:0000049">
    <property type="term" value="F:tRNA binding"/>
    <property type="evidence" value="ECO:0007669"/>
    <property type="project" value="InterPro"/>
</dbReference>
<dbReference type="GO" id="GO:0008270">
    <property type="term" value="F:zinc ion binding"/>
    <property type="evidence" value="ECO:0007669"/>
    <property type="project" value="UniProtKB-UniRule"/>
</dbReference>
<dbReference type="GO" id="GO:0006428">
    <property type="term" value="P:isoleucyl-tRNA aminoacylation"/>
    <property type="evidence" value="ECO:0007669"/>
    <property type="project" value="UniProtKB-UniRule"/>
</dbReference>
<dbReference type="CDD" id="cd07960">
    <property type="entry name" value="Anticodon_Ia_Ile_BEm"/>
    <property type="match status" value="1"/>
</dbReference>
<dbReference type="CDD" id="cd00818">
    <property type="entry name" value="IleRS_core"/>
    <property type="match status" value="1"/>
</dbReference>
<dbReference type="FunFam" id="1.10.730.20:FF:000001">
    <property type="entry name" value="Isoleucine--tRNA ligase"/>
    <property type="match status" value="1"/>
</dbReference>
<dbReference type="FunFam" id="3.40.50.620:FF:000042">
    <property type="entry name" value="Isoleucine--tRNA ligase"/>
    <property type="match status" value="1"/>
</dbReference>
<dbReference type="FunFam" id="3.40.50.620:FF:000048">
    <property type="entry name" value="Isoleucine--tRNA ligase"/>
    <property type="match status" value="1"/>
</dbReference>
<dbReference type="FunFam" id="3.90.740.10:FF:000002">
    <property type="entry name" value="Isoleucine--tRNA ligase"/>
    <property type="match status" value="1"/>
</dbReference>
<dbReference type="Gene3D" id="1.10.730.20">
    <property type="match status" value="1"/>
</dbReference>
<dbReference type="Gene3D" id="3.40.50.620">
    <property type="entry name" value="HUPs"/>
    <property type="match status" value="2"/>
</dbReference>
<dbReference type="Gene3D" id="3.90.740.10">
    <property type="entry name" value="Valyl/Leucyl/Isoleucyl-tRNA synthetase, editing domain"/>
    <property type="match status" value="1"/>
</dbReference>
<dbReference type="HAMAP" id="MF_02002">
    <property type="entry name" value="Ile_tRNA_synth_type1"/>
    <property type="match status" value="1"/>
</dbReference>
<dbReference type="InterPro" id="IPR001412">
    <property type="entry name" value="aa-tRNA-synth_I_CS"/>
</dbReference>
<dbReference type="InterPro" id="IPR002300">
    <property type="entry name" value="aa-tRNA-synth_Ia"/>
</dbReference>
<dbReference type="InterPro" id="IPR033708">
    <property type="entry name" value="Anticodon_Ile_BEm"/>
</dbReference>
<dbReference type="InterPro" id="IPR002301">
    <property type="entry name" value="Ile-tRNA-ligase"/>
</dbReference>
<dbReference type="InterPro" id="IPR023585">
    <property type="entry name" value="Ile-tRNA-ligase_type1"/>
</dbReference>
<dbReference type="InterPro" id="IPR050081">
    <property type="entry name" value="Ile-tRNA_ligase"/>
</dbReference>
<dbReference type="InterPro" id="IPR013155">
    <property type="entry name" value="M/V/L/I-tRNA-synth_anticd-bd"/>
</dbReference>
<dbReference type="InterPro" id="IPR014729">
    <property type="entry name" value="Rossmann-like_a/b/a_fold"/>
</dbReference>
<dbReference type="InterPro" id="IPR009080">
    <property type="entry name" value="tRNAsynth_Ia_anticodon-bd"/>
</dbReference>
<dbReference type="InterPro" id="IPR009008">
    <property type="entry name" value="Val/Leu/Ile-tRNA-synth_edit"/>
</dbReference>
<dbReference type="InterPro" id="IPR010663">
    <property type="entry name" value="Znf_FPG/IleRS"/>
</dbReference>
<dbReference type="NCBIfam" id="TIGR00392">
    <property type="entry name" value="ileS"/>
    <property type="match status" value="1"/>
</dbReference>
<dbReference type="PANTHER" id="PTHR42765:SF1">
    <property type="entry name" value="ISOLEUCINE--TRNA LIGASE, MITOCHONDRIAL"/>
    <property type="match status" value="1"/>
</dbReference>
<dbReference type="PANTHER" id="PTHR42765">
    <property type="entry name" value="SOLEUCYL-TRNA SYNTHETASE"/>
    <property type="match status" value="1"/>
</dbReference>
<dbReference type="Pfam" id="PF08264">
    <property type="entry name" value="Anticodon_1"/>
    <property type="match status" value="1"/>
</dbReference>
<dbReference type="Pfam" id="PF00133">
    <property type="entry name" value="tRNA-synt_1"/>
    <property type="match status" value="1"/>
</dbReference>
<dbReference type="Pfam" id="PF06827">
    <property type="entry name" value="zf-FPG_IleRS"/>
    <property type="match status" value="1"/>
</dbReference>
<dbReference type="PRINTS" id="PR00984">
    <property type="entry name" value="TRNASYNTHILE"/>
</dbReference>
<dbReference type="SUPFAM" id="SSF47323">
    <property type="entry name" value="Anticodon-binding domain of a subclass of class I aminoacyl-tRNA synthetases"/>
    <property type="match status" value="1"/>
</dbReference>
<dbReference type="SUPFAM" id="SSF52374">
    <property type="entry name" value="Nucleotidylyl transferase"/>
    <property type="match status" value="1"/>
</dbReference>
<dbReference type="SUPFAM" id="SSF50677">
    <property type="entry name" value="ValRS/IleRS/LeuRS editing domain"/>
    <property type="match status" value="1"/>
</dbReference>
<dbReference type="PROSITE" id="PS00178">
    <property type="entry name" value="AA_TRNA_LIGASE_I"/>
    <property type="match status" value="1"/>
</dbReference>
<evidence type="ECO:0000255" key="1">
    <source>
        <dbReference type="HAMAP-Rule" id="MF_02002"/>
    </source>
</evidence>
<comment type="function">
    <text evidence="1">Catalyzes the attachment of isoleucine to tRNA(Ile). As IleRS can inadvertently accommodate and process structurally similar amino acids such as valine, to avoid such errors it has two additional distinct tRNA(Ile)-dependent editing activities. One activity is designated as 'pretransfer' editing and involves the hydrolysis of activated Val-AMP. The other activity is designated 'posttransfer' editing and involves deacylation of mischarged Val-tRNA(Ile).</text>
</comment>
<comment type="catalytic activity">
    <reaction evidence="1">
        <text>tRNA(Ile) + L-isoleucine + ATP = L-isoleucyl-tRNA(Ile) + AMP + diphosphate</text>
        <dbReference type="Rhea" id="RHEA:11060"/>
        <dbReference type="Rhea" id="RHEA-COMP:9666"/>
        <dbReference type="Rhea" id="RHEA-COMP:9695"/>
        <dbReference type="ChEBI" id="CHEBI:30616"/>
        <dbReference type="ChEBI" id="CHEBI:33019"/>
        <dbReference type="ChEBI" id="CHEBI:58045"/>
        <dbReference type="ChEBI" id="CHEBI:78442"/>
        <dbReference type="ChEBI" id="CHEBI:78528"/>
        <dbReference type="ChEBI" id="CHEBI:456215"/>
        <dbReference type="EC" id="6.1.1.5"/>
    </reaction>
</comment>
<comment type="cofactor">
    <cofactor evidence="1">
        <name>Zn(2+)</name>
        <dbReference type="ChEBI" id="CHEBI:29105"/>
    </cofactor>
    <text evidence="1">Binds 1 zinc ion per subunit.</text>
</comment>
<comment type="subunit">
    <text evidence="1">Monomer.</text>
</comment>
<comment type="subcellular location">
    <subcellularLocation>
        <location evidence="1">Cytoplasm</location>
    </subcellularLocation>
</comment>
<comment type="domain">
    <text evidence="1">IleRS has two distinct active sites: one for aminoacylation and one for editing. The misactivated valine is translocated from the active site to the editing site, which sterically excludes the correctly activated isoleucine. The single editing site contains two valyl binding pockets, one specific for each substrate (Val-AMP or Val-tRNA(Ile)).</text>
</comment>
<comment type="similarity">
    <text evidence="1">Belongs to the class-I aminoacyl-tRNA synthetase family. IleS type 1 subfamily.</text>
</comment>
<keyword id="KW-0007">Acetylation</keyword>
<keyword id="KW-0030">Aminoacyl-tRNA synthetase</keyword>
<keyword id="KW-0067">ATP-binding</keyword>
<keyword id="KW-0963">Cytoplasm</keyword>
<keyword id="KW-0436">Ligase</keyword>
<keyword id="KW-0479">Metal-binding</keyword>
<keyword id="KW-0547">Nucleotide-binding</keyword>
<keyword id="KW-0648">Protein biosynthesis</keyword>
<keyword id="KW-0862">Zinc</keyword>
<gene>
    <name evidence="1" type="primary">ileS</name>
    <name type="ordered locus">BWG_0024</name>
</gene>
<protein>
    <recommendedName>
        <fullName evidence="1">Isoleucine--tRNA ligase</fullName>
        <ecNumber evidence="1">6.1.1.5</ecNumber>
    </recommendedName>
    <alternativeName>
        <fullName evidence="1">Isoleucyl-tRNA synthetase</fullName>
        <shortName evidence="1">IleRS</shortName>
    </alternativeName>
</protein>
<feature type="chain" id="PRO_1000216234" description="Isoleucine--tRNA ligase">
    <location>
        <begin position="1"/>
        <end position="938"/>
    </location>
</feature>
<feature type="short sequence motif" description="'HIGH' region">
    <location>
        <begin position="58"/>
        <end position="68"/>
    </location>
</feature>
<feature type="short sequence motif" description="'KMSKS' region">
    <location>
        <begin position="602"/>
        <end position="606"/>
    </location>
</feature>
<feature type="binding site" evidence="1">
    <location>
        <position position="561"/>
    </location>
    <ligand>
        <name>L-isoleucyl-5'-AMP</name>
        <dbReference type="ChEBI" id="CHEBI:178002"/>
    </ligand>
</feature>
<feature type="binding site" evidence="1">
    <location>
        <position position="605"/>
    </location>
    <ligand>
        <name>ATP</name>
        <dbReference type="ChEBI" id="CHEBI:30616"/>
    </ligand>
</feature>
<feature type="binding site" evidence="1">
    <location>
        <position position="901"/>
    </location>
    <ligand>
        <name>Zn(2+)</name>
        <dbReference type="ChEBI" id="CHEBI:29105"/>
    </ligand>
</feature>
<feature type="binding site" evidence="1">
    <location>
        <position position="904"/>
    </location>
    <ligand>
        <name>Zn(2+)</name>
        <dbReference type="ChEBI" id="CHEBI:29105"/>
    </ligand>
</feature>
<feature type="binding site" evidence="1">
    <location>
        <position position="921"/>
    </location>
    <ligand>
        <name>Zn(2+)</name>
        <dbReference type="ChEBI" id="CHEBI:29105"/>
    </ligand>
</feature>
<feature type="binding site" evidence="1">
    <location>
        <position position="924"/>
    </location>
    <ligand>
        <name>Zn(2+)</name>
        <dbReference type="ChEBI" id="CHEBI:29105"/>
    </ligand>
</feature>
<feature type="modified residue" description="N6-acetyllysine" evidence="1">
    <location>
        <position position="183"/>
    </location>
</feature>
<accession>C4ZPV2</accession>
<name>SYI_ECOBW</name>
<sequence>MSDYKSTLNLPETGFPMRGDLAKREPGMLARWTDDDLYGIIRAAKKGKKTFILHDGPPYANGSIHIGHSVNKILKDIIVKSKGLSGYDSPYVPGWDCHGLPIELKVEQEYGKPGEKFTAAEFRAKCREYAATQVDGQRKDFIRLGVLGDWSHPYLTMDFKTEANIIRALGKIIGNGHLHKGAKPVHWCVDCRSALAEAEVEYYDKTSPSIDVAFQAVDQDALKAKFAVSNVNGPISLVIWTTTPWTLPANRAISIAPDFDYALVQIDGQAVILAKDLVESVMQRIGVTDYTILGTVKGAELELLRFTHPFMGFDVPAILGDHVTLDAGTGAVHTAPGHGPDDYVIGQKYGLETANPVGPDGTYLPGTYPTLDGVNVFKANDIVVALLQEKGALLHVEKMQHSYPCCWRHKTPIIFRATPQWFVSMDQKGLRAQSLKEIKGVQWIPDWGQARIESMVANRPDWCISRQRTWGVPMSLFVHKDTEELHPRTLELMEEVAKRVEVDGIQAWWDLDAKEILGDEADQYVKVPDTLDVWFDSGSTHSSVVDVRPEFAGHAADMYLEGSDQHRGWFMSSLMISTAMKGKAPYRQVLTHGFTVDGQGRKMSKSIGNTVSPQDVMNKLGADILRLWVASTDYTGEMAVSDEILKRAADSYRRIRNTARFLLANLNGFDPAKDMVKPEEMVVLDRWAVGCAKAAQEDILKAYEAYDFHEVVQRLMRFCSVEMGSFYLDIIKDRQYTAKADSVARRSCQTALYHIAEALVRWMAPILSFTADEVWGYLPGEREKYVFTGEWYEGLFGLADSEAMNDAFWDELLKVRGEVNKVIEQARADKKVGGSLEAAVTLYAEPELSAKLTALGDELRFVLLTSGATVADYNDAPADAQQSEVLKGLKVALSKAEGEKCPRCWHYTQDVGKVAEHAEICGRCVSNVAGDGEKRKFA</sequence>
<reference key="1">
    <citation type="journal article" date="2009" name="J. Bacteriol.">
        <title>Genomic sequencing reveals regulatory mutations and recombinational events in the widely used MC4100 lineage of Escherichia coli K-12.</title>
        <authorList>
            <person name="Ferenci T."/>
            <person name="Zhou Z."/>
            <person name="Betteridge T."/>
            <person name="Ren Y."/>
            <person name="Liu Y."/>
            <person name="Feng L."/>
            <person name="Reeves P.R."/>
            <person name="Wang L."/>
        </authorList>
    </citation>
    <scope>NUCLEOTIDE SEQUENCE [LARGE SCALE GENOMIC DNA]</scope>
    <source>
        <strain>K12 / MC4100 / BW2952</strain>
    </source>
</reference>
<organism>
    <name type="scientific">Escherichia coli (strain K12 / MC4100 / BW2952)</name>
    <dbReference type="NCBI Taxonomy" id="595496"/>
    <lineage>
        <taxon>Bacteria</taxon>
        <taxon>Pseudomonadati</taxon>
        <taxon>Pseudomonadota</taxon>
        <taxon>Gammaproteobacteria</taxon>
        <taxon>Enterobacterales</taxon>
        <taxon>Enterobacteriaceae</taxon>
        <taxon>Escherichia</taxon>
    </lineage>
</organism>
<proteinExistence type="inferred from homology"/>